<dbReference type="EMBL" id="AL766844">
    <property type="protein sequence ID" value="CAD45906.1"/>
    <property type="molecule type" value="Genomic_DNA"/>
</dbReference>
<dbReference type="RefSeq" id="WP_000371297.1">
    <property type="nucleotide sequence ID" value="NC_004368.1"/>
</dbReference>
<dbReference type="SMR" id="Q8E796"/>
<dbReference type="KEGG" id="san:gbs0261"/>
<dbReference type="eggNOG" id="COG4224">
    <property type="taxonomic scope" value="Bacteria"/>
</dbReference>
<dbReference type="HOGENOM" id="CLU_173137_0_2_9"/>
<dbReference type="Proteomes" id="UP000000823">
    <property type="component" value="Chromosome"/>
</dbReference>
<dbReference type="GO" id="GO:0005737">
    <property type="term" value="C:cytoplasm"/>
    <property type="evidence" value="ECO:0007669"/>
    <property type="project" value="UniProtKB-SubCell"/>
</dbReference>
<dbReference type="Gene3D" id="1.10.287.540">
    <property type="entry name" value="Helix hairpin bin"/>
    <property type="match status" value="1"/>
</dbReference>
<dbReference type="HAMAP" id="MF_01103">
    <property type="entry name" value="UPF0291"/>
    <property type="match status" value="1"/>
</dbReference>
<dbReference type="InterPro" id="IPR009242">
    <property type="entry name" value="DUF896"/>
</dbReference>
<dbReference type="NCBIfam" id="NF002711">
    <property type="entry name" value="PRK02539.1"/>
    <property type="match status" value="1"/>
</dbReference>
<dbReference type="PANTHER" id="PTHR37300">
    <property type="entry name" value="UPF0291 PROTEIN CBO2609/CLC_2481"/>
    <property type="match status" value="1"/>
</dbReference>
<dbReference type="PANTHER" id="PTHR37300:SF1">
    <property type="entry name" value="UPF0291 PROTEIN YNZC"/>
    <property type="match status" value="1"/>
</dbReference>
<dbReference type="Pfam" id="PF05979">
    <property type="entry name" value="DUF896"/>
    <property type="match status" value="1"/>
</dbReference>
<dbReference type="SUPFAM" id="SSF158221">
    <property type="entry name" value="YnzC-like"/>
    <property type="match status" value="1"/>
</dbReference>
<reference key="1">
    <citation type="journal article" date="2002" name="Mol. Microbiol.">
        <title>Genome sequence of Streptococcus agalactiae, a pathogen causing invasive neonatal disease.</title>
        <authorList>
            <person name="Glaser P."/>
            <person name="Rusniok C."/>
            <person name="Buchrieser C."/>
            <person name="Chevalier F."/>
            <person name="Frangeul L."/>
            <person name="Msadek T."/>
            <person name="Zouine M."/>
            <person name="Couve E."/>
            <person name="Lalioui L."/>
            <person name="Poyart C."/>
            <person name="Trieu-Cuot P."/>
            <person name="Kunst F."/>
        </authorList>
    </citation>
    <scope>NUCLEOTIDE SEQUENCE [LARGE SCALE GENOMIC DNA]</scope>
    <source>
        <strain>NEM316</strain>
    </source>
</reference>
<protein>
    <recommendedName>
        <fullName evidence="1">UPF0291 protein gbs0261</fullName>
    </recommendedName>
</protein>
<comment type="subcellular location">
    <subcellularLocation>
        <location evidence="1">Cytoplasm</location>
    </subcellularLocation>
</comment>
<comment type="similarity">
    <text evidence="1">Belongs to the UPF0291 family.</text>
</comment>
<name>Y261_STRA3</name>
<gene>
    <name type="ordered locus">gbs0261</name>
</gene>
<evidence type="ECO:0000255" key="1">
    <source>
        <dbReference type="HAMAP-Rule" id="MF_01103"/>
    </source>
</evidence>
<evidence type="ECO:0000256" key="2">
    <source>
        <dbReference type="SAM" id="MobiDB-lite"/>
    </source>
</evidence>
<accession>Q8E796</accession>
<organism>
    <name type="scientific">Streptococcus agalactiae serotype III (strain NEM316)</name>
    <dbReference type="NCBI Taxonomy" id="211110"/>
    <lineage>
        <taxon>Bacteria</taxon>
        <taxon>Bacillati</taxon>
        <taxon>Bacillota</taxon>
        <taxon>Bacilli</taxon>
        <taxon>Lactobacillales</taxon>
        <taxon>Streptococcaceae</taxon>
        <taxon>Streptococcus</taxon>
    </lineage>
</organism>
<sequence length="85" mass="9791">MDPKKIARINELSKKKKTVGLTGEEKVEQAKLREEYIEGFRRSVRHHVEGIKLVDDEGNDVTPEKLRQVQREKGLHGRSLDDPNS</sequence>
<feature type="chain" id="PRO_0000094997" description="UPF0291 protein gbs0261">
    <location>
        <begin position="1"/>
        <end position="85"/>
    </location>
</feature>
<feature type="region of interest" description="Disordered" evidence="2">
    <location>
        <begin position="58"/>
        <end position="85"/>
    </location>
</feature>
<feature type="compositionally biased region" description="Basic and acidic residues" evidence="2">
    <location>
        <begin position="62"/>
        <end position="85"/>
    </location>
</feature>
<keyword id="KW-0963">Cytoplasm</keyword>
<proteinExistence type="inferred from homology"/>